<protein>
    <recommendedName>
        <fullName evidence="2">Defensin beta 118</fullName>
    </recommendedName>
    <alternativeName>
        <fullName evidence="5">Beta-defensin 118</fullName>
    </alternativeName>
</protein>
<organism>
    <name type="scientific">Pan troglodytes</name>
    <name type="common">Chimpanzee</name>
    <dbReference type="NCBI Taxonomy" id="9598"/>
    <lineage>
        <taxon>Eukaryota</taxon>
        <taxon>Metazoa</taxon>
        <taxon>Chordata</taxon>
        <taxon>Craniata</taxon>
        <taxon>Vertebrata</taxon>
        <taxon>Euteleostomi</taxon>
        <taxon>Mammalia</taxon>
        <taxon>Eutheria</taxon>
        <taxon>Euarchontoglires</taxon>
        <taxon>Primates</taxon>
        <taxon>Haplorrhini</taxon>
        <taxon>Catarrhini</taxon>
        <taxon>Hominidae</taxon>
        <taxon>Pan</taxon>
    </lineage>
</organism>
<comment type="function">
    <text evidence="2">Host defense peptide that exhibits antimicrobial activity against both Gram-negative bacteria, such as E.coli and S.typhimurium, and Gram-positive bacteria, such as S.aureus and B.subtilis (By similarity). Inhibits cell adhesion of E.coli on intestinal epithelial enterocytes (By similarity). Causes rapid permeabilization of both the outer and inner membrane of E.coli, leading to morphological alterations on the bacterial surface (By similarity). Binds to bacterial lipopolysaccharides (LPS) with high affinity, and may thereby be involved in immunoregulation through LPS neutralization (By similarity). May contribute to epididymal innate immunity and protect the sperm against attack by microorganisms (By similarity).</text>
</comment>
<comment type="subcellular location">
    <subcellularLocation>
        <location evidence="2">Secreted</location>
    </subcellularLocation>
</comment>
<comment type="PTM">
    <text evidence="2">The three-dimensional structure formed by the three intramolecular disulfide bridges is indispensable for antimicrobial activity.</text>
</comment>
<comment type="similarity">
    <text evidence="5">Belongs to the beta-defensin family.</text>
</comment>
<dbReference type="EMBL" id="DQ012070">
    <property type="protein sequence ID" value="AAY59801.1"/>
    <property type="molecule type" value="mRNA"/>
</dbReference>
<dbReference type="EMBL" id="AM410124">
    <property type="protein sequence ID" value="CAL68939.1"/>
    <property type="molecule type" value="Genomic_DNA"/>
</dbReference>
<dbReference type="RefSeq" id="NP_001123238.1">
    <property type="nucleotide sequence ID" value="NM_001129766.1"/>
</dbReference>
<dbReference type="SMR" id="Q30KK9"/>
<dbReference type="STRING" id="9598.ENSPTRP00000067247"/>
<dbReference type="PaxDb" id="9598-ENSPTRP00000022888"/>
<dbReference type="Ensembl" id="ENSPTRT00000096049.1">
    <property type="protein sequence ID" value="ENSPTRP00000074052.1"/>
    <property type="gene ID" value="ENSPTRG00000045857.1"/>
</dbReference>
<dbReference type="GeneID" id="741920"/>
<dbReference type="KEGG" id="ptr:741920"/>
<dbReference type="CTD" id="117285"/>
<dbReference type="VGNC" id="VGNC:13842">
    <property type="gene designation" value="DEFB118"/>
</dbReference>
<dbReference type="eggNOG" id="ENOG502TM86">
    <property type="taxonomic scope" value="Eukaryota"/>
</dbReference>
<dbReference type="GeneTree" id="ENSGT00530000064565"/>
<dbReference type="HOGENOM" id="CLU_164142_0_0_1"/>
<dbReference type="InParanoid" id="Q30KK9"/>
<dbReference type="OMA" id="CWNKSGH"/>
<dbReference type="OrthoDB" id="13419at9604"/>
<dbReference type="TreeFam" id="TF336381"/>
<dbReference type="Proteomes" id="UP000002277">
    <property type="component" value="Chromosome 20"/>
</dbReference>
<dbReference type="GO" id="GO:0005576">
    <property type="term" value="C:extracellular region"/>
    <property type="evidence" value="ECO:0007669"/>
    <property type="project" value="UniProtKB-SubCell"/>
</dbReference>
<dbReference type="GO" id="GO:0001530">
    <property type="term" value="F:lipopolysaccharide binding"/>
    <property type="evidence" value="ECO:0000250"/>
    <property type="project" value="UniProtKB"/>
</dbReference>
<dbReference type="GO" id="GO:0050829">
    <property type="term" value="P:defense response to Gram-negative bacterium"/>
    <property type="evidence" value="ECO:0000250"/>
    <property type="project" value="UniProtKB"/>
</dbReference>
<dbReference type="GO" id="GO:0050830">
    <property type="term" value="P:defense response to Gram-positive bacterium"/>
    <property type="evidence" value="ECO:0000250"/>
    <property type="project" value="UniProtKB"/>
</dbReference>
<dbReference type="GO" id="GO:0045087">
    <property type="term" value="P:innate immune response"/>
    <property type="evidence" value="ECO:0000250"/>
    <property type="project" value="UniProtKB"/>
</dbReference>
<dbReference type="GO" id="GO:0031640">
    <property type="term" value="P:killing of cells of another organism"/>
    <property type="evidence" value="ECO:0000250"/>
    <property type="project" value="UniProtKB"/>
</dbReference>
<dbReference type="GO" id="GO:0007162">
    <property type="term" value="P:negative regulation of cell adhesion"/>
    <property type="evidence" value="ECO:0000250"/>
    <property type="project" value="UniProtKB"/>
</dbReference>
<dbReference type="GO" id="GO:0031665">
    <property type="term" value="P:negative regulation of lipopolysaccharide-mediated signaling pathway"/>
    <property type="evidence" value="ECO:0000250"/>
    <property type="project" value="UniProtKB"/>
</dbReference>
<dbReference type="InterPro" id="IPR050544">
    <property type="entry name" value="Beta-defensin"/>
</dbReference>
<dbReference type="InterPro" id="IPR025933">
    <property type="entry name" value="Beta_defensin_dom"/>
</dbReference>
<dbReference type="PANTHER" id="PTHR15001">
    <property type="entry name" value="BETA-DEFENSIN 123-RELATED"/>
    <property type="match status" value="1"/>
</dbReference>
<dbReference type="PANTHER" id="PTHR15001:SF7">
    <property type="entry name" value="DEFENSIN BETA 118"/>
    <property type="match status" value="1"/>
</dbReference>
<dbReference type="Pfam" id="PF13841">
    <property type="entry name" value="Defensin_beta_2"/>
    <property type="match status" value="1"/>
</dbReference>
<reference key="1">
    <citation type="journal article" date="2005" name="Physiol. Genomics">
        <title>Cross-species analysis of the mammalian beta-defensin gene family: presence of syntenic gene clusters and preferential expression in the male reproductive tract.</title>
        <authorList>
            <person name="Patil A.A."/>
            <person name="Cai Y."/>
            <person name="Sang Y."/>
            <person name="Blecha F."/>
            <person name="Zhang G."/>
        </authorList>
    </citation>
    <scope>NUCLEOTIDE SEQUENCE [MRNA]</scope>
</reference>
<reference key="2">
    <citation type="submission" date="2006-11" db="EMBL/GenBank/DDBJ databases">
        <title>Evolution and sequence variation of human beta-defensin genes.</title>
        <authorList>
            <person name="Hollox E.J."/>
            <person name="Armour J.A.L."/>
        </authorList>
    </citation>
    <scope>NUCLEOTIDE SEQUENCE [GENOMIC DNA]</scope>
</reference>
<keyword id="KW-0044">Antibiotic</keyword>
<keyword id="KW-0929">Antimicrobial</keyword>
<keyword id="KW-0165">Cleavage on pair of basic residues</keyword>
<keyword id="KW-0211">Defensin</keyword>
<keyword id="KW-1015">Disulfide bond</keyword>
<keyword id="KW-1185">Reference proteome</keyword>
<keyword id="KW-0964">Secreted</keyword>
<keyword id="KW-0732">Signal</keyword>
<feature type="signal peptide" evidence="3">
    <location>
        <begin position="1"/>
        <end position="19"/>
    </location>
</feature>
<feature type="peptide" id="PRO_0000045346" description="Defensin beta 118">
    <location>
        <begin position="20"/>
        <end position="62"/>
    </location>
</feature>
<feature type="propeptide" id="PRO_0000045347" evidence="3">
    <location>
        <begin position="65"/>
        <end position="123"/>
    </location>
</feature>
<feature type="region of interest" description="Disordered" evidence="4">
    <location>
        <begin position="100"/>
        <end position="123"/>
    </location>
</feature>
<feature type="compositionally biased region" description="Basic and acidic residues" evidence="4">
    <location>
        <begin position="100"/>
        <end position="110"/>
    </location>
</feature>
<feature type="compositionally biased region" description="Polar residues" evidence="4">
    <location>
        <begin position="112"/>
        <end position="123"/>
    </location>
</feature>
<feature type="disulfide bond" evidence="1">
    <location>
        <begin position="27"/>
        <end position="54"/>
    </location>
</feature>
<feature type="disulfide bond" evidence="1">
    <location>
        <begin position="34"/>
        <end position="48"/>
    </location>
</feature>
<feature type="disulfide bond" evidence="1">
    <location>
        <begin position="38"/>
        <end position="55"/>
    </location>
</feature>
<name>DB118_PANTR</name>
<accession>Q30KK9</accession>
<accession>A4H219</accession>
<sequence>MKLLLLALPVLVLLPQVIPAYSGEKKCWNRSGHCRKQCKDGEAVKDTCKNLRACCVPSNEDHRRVPMTSPTPLSDSTPGIIDDILTVRFTTDYFEVSSKKDMVEESEAGRGTETSLPNVHHSS</sequence>
<evidence type="ECO:0000250" key="1">
    <source>
        <dbReference type="UniProtKB" id="Q91V82"/>
    </source>
</evidence>
<evidence type="ECO:0000250" key="2">
    <source>
        <dbReference type="UniProtKB" id="Q96PH6"/>
    </source>
</evidence>
<evidence type="ECO:0000255" key="3"/>
<evidence type="ECO:0000256" key="4">
    <source>
        <dbReference type="SAM" id="MobiDB-lite"/>
    </source>
</evidence>
<evidence type="ECO:0000305" key="5"/>
<proteinExistence type="evidence at transcript level"/>
<gene>
    <name type="primary">DEFB118</name>
</gene>